<protein>
    <recommendedName>
        <fullName evidence="1">Trigger factor</fullName>
        <shortName evidence="1">TF</shortName>
        <ecNumber evidence="1">5.2.1.8</ecNumber>
    </recommendedName>
    <alternativeName>
        <fullName evidence="1">PPIase</fullName>
    </alternativeName>
</protein>
<comment type="function">
    <text evidence="1">Involved in protein export. Acts as a chaperone by maintaining the newly synthesized protein in an open conformation. Functions as a peptidyl-prolyl cis-trans isomerase.</text>
</comment>
<comment type="catalytic activity">
    <reaction evidence="1">
        <text>[protein]-peptidylproline (omega=180) = [protein]-peptidylproline (omega=0)</text>
        <dbReference type="Rhea" id="RHEA:16237"/>
        <dbReference type="Rhea" id="RHEA-COMP:10747"/>
        <dbReference type="Rhea" id="RHEA-COMP:10748"/>
        <dbReference type="ChEBI" id="CHEBI:83833"/>
        <dbReference type="ChEBI" id="CHEBI:83834"/>
        <dbReference type="EC" id="5.2.1.8"/>
    </reaction>
</comment>
<comment type="subcellular location">
    <subcellularLocation>
        <location>Cytoplasm</location>
    </subcellularLocation>
    <text evidence="1">About half TF is bound to the ribosome near the polypeptide exit tunnel while the other half is free in the cytoplasm.</text>
</comment>
<comment type="domain">
    <text evidence="1">Consists of 3 domains; the N-terminus binds the ribosome, the middle domain has PPIase activity, while the C-terminus has intrinsic chaperone activity on its own.</text>
</comment>
<comment type="similarity">
    <text evidence="1">Belongs to the FKBP-type PPIase family. Tig subfamily.</text>
</comment>
<feature type="chain" id="PRO_1000198175" description="Trigger factor">
    <location>
        <begin position="1"/>
        <end position="434"/>
    </location>
</feature>
<feature type="domain" description="PPIase FKBP-type" evidence="1">
    <location>
        <begin position="160"/>
        <end position="245"/>
    </location>
</feature>
<accession>B8E5F0</accession>
<reference key="1">
    <citation type="submission" date="2008-12" db="EMBL/GenBank/DDBJ databases">
        <title>Complete sequence of chromosome of Shewanella baltica OS223.</title>
        <authorList>
            <consortium name="US DOE Joint Genome Institute"/>
            <person name="Lucas S."/>
            <person name="Copeland A."/>
            <person name="Lapidus A."/>
            <person name="Glavina del Rio T."/>
            <person name="Dalin E."/>
            <person name="Tice H."/>
            <person name="Bruce D."/>
            <person name="Goodwin L."/>
            <person name="Pitluck S."/>
            <person name="Chertkov O."/>
            <person name="Meincke L."/>
            <person name="Brettin T."/>
            <person name="Detter J.C."/>
            <person name="Han C."/>
            <person name="Kuske C.R."/>
            <person name="Larimer F."/>
            <person name="Land M."/>
            <person name="Hauser L."/>
            <person name="Kyrpides N."/>
            <person name="Ovchinnikova G."/>
            <person name="Brettar I."/>
            <person name="Rodrigues J."/>
            <person name="Konstantinidis K."/>
            <person name="Tiedje J."/>
        </authorList>
    </citation>
    <scope>NUCLEOTIDE SEQUENCE [LARGE SCALE GENOMIC DNA]</scope>
    <source>
        <strain>OS223</strain>
    </source>
</reference>
<proteinExistence type="inferred from homology"/>
<evidence type="ECO:0000255" key="1">
    <source>
        <dbReference type="HAMAP-Rule" id="MF_00303"/>
    </source>
</evidence>
<gene>
    <name evidence="1" type="primary">tig</name>
    <name type="ordered locus">Sbal223_2751</name>
</gene>
<name>TIG_SHEB2</name>
<dbReference type="EC" id="5.2.1.8" evidence="1"/>
<dbReference type="EMBL" id="CP001252">
    <property type="protein sequence ID" value="ACK47239.1"/>
    <property type="molecule type" value="Genomic_DNA"/>
</dbReference>
<dbReference type="RefSeq" id="WP_006085365.1">
    <property type="nucleotide sequence ID" value="NC_011663.1"/>
</dbReference>
<dbReference type="SMR" id="B8E5F0"/>
<dbReference type="GeneID" id="11771861"/>
<dbReference type="KEGG" id="sbp:Sbal223_2751"/>
<dbReference type="HOGENOM" id="CLU_033058_2_0_6"/>
<dbReference type="Proteomes" id="UP000002507">
    <property type="component" value="Chromosome"/>
</dbReference>
<dbReference type="GO" id="GO:0005737">
    <property type="term" value="C:cytoplasm"/>
    <property type="evidence" value="ECO:0007669"/>
    <property type="project" value="UniProtKB-SubCell"/>
</dbReference>
<dbReference type="GO" id="GO:0003755">
    <property type="term" value="F:peptidyl-prolyl cis-trans isomerase activity"/>
    <property type="evidence" value="ECO:0007669"/>
    <property type="project" value="UniProtKB-UniRule"/>
</dbReference>
<dbReference type="GO" id="GO:0044183">
    <property type="term" value="F:protein folding chaperone"/>
    <property type="evidence" value="ECO:0007669"/>
    <property type="project" value="TreeGrafter"/>
</dbReference>
<dbReference type="GO" id="GO:0043022">
    <property type="term" value="F:ribosome binding"/>
    <property type="evidence" value="ECO:0007669"/>
    <property type="project" value="TreeGrafter"/>
</dbReference>
<dbReference type="GO" id="GO:0051083">
    <property type="term" value="P:'de novo' cotranslational protein folding"/>
    <property type="evidence" value="ECO:0007669"/>
    <property type="project" value="TreeGrafter"/>
</dbReference>
<dbReference type="GO" id="GO:0051301">
    <property type="term" value="P:cell division"/>
    <property type="evidence" value="ECO:0007669"/>
    <property type="project" value="UniProtKB-KW"/>
</dbReference>
<dbReference type="GO" id="GO:0061077">
    <property type="term" value="P:chaperone-mediated protein folding"/>
    <property type="evidence" value="ECO:0007669"/>
    <property type="project" value="TreeGrafter"/>
</dbReference>
<dbReference type="GO" id="GO:0015031">
    <property type="term" value="P:protein transport"/>
    <property type="evidence" value="ECO:0007669"/>
    <property type="project" value="UniProtKB-UniRule"/>
</dbReference>
<dbReference type="GO" id="GO:0043335">
    <property type="term" value="P:protein unfolding"/>
    <property type="evidence" value="ECO:0007669"/>
    <property type="project" value="TreeGrafter"/>
</dbReference>
<dbReference type="FunFam" id="3.10.50.40:FF:000001">
    <property type="entry name" value="Trigger factor"/>
    <property type="match status" value="1"/>
</dbReference>
<dbReference type="FunFam" id="3.30.70.1050:FF:000001">
    <property type="entry name" value="Trigger factor"/>
    <property type="match status" value="1"/>
</dbReference>
<dbReference type="Gene3D" id="3.10.50.40">
    <property type="match status" value="1"/>
</dbReference>
<dbReference type="Gene3D" id="3.30.70.1050">
    <property type="entry name" value="Trigger factor ribosome-binding domain"/>
    <property type="match status" value="1"/>
</dbReference>
<dbReference type="Gene3D" id="1.10.3120.10">
    <property type="entry name" value="Trigger factor, C-terminal domain"/>
    <property type="match status" value="1"/>
</dbReference>
<dbReference type="HAMAP" id="MF_00303">
    <property type="entry name" value="Trigger_factor_Tig"/>
    <property type="match status" value="1"/>
</dbReference>
<dbReference type="InterPro" id="IPR046357">
    <property type="entry name" value="PPIase_dom_sf"/>
</dbReference>
<dbReference type="InterPro" id="IPR001179">
    <property type="entry name" value="PPIase_FKBP_dom"/>
</dbReference>
<dbReference type="InterPro" id="IPR005215">
    <property type="entry name" value="Trig_fac"/>
</dbReference>
<dbReference type="InterPro" id="IPR008880">
    <property type="entry name" value="Trigger_fac_C"/>
</dbReference>
<dbReference type="InterPro" id="IPR037041">
    <property type="entry name" value="Trigger_fac_C_sf"/>
</dbReference>
<dbReference type="InterPro" id="IPR008881">
    <property type="entry name" value="Trigger_fac_ribosome-bd_bac"/>
</dbReference>
<dbReference type="InterPro" id="IPR036611">
    <property type="entry name" value="Trigger_fac_ribosome-bd_sf"/>
</dbReference>
<dbReference type="InterPro" id="IPR027304">
    <property type="entry name" value="Trigger_fact/SurA_dom_sf"/>
</dbReference>
<dbReference type="NCBIfam" id="TIGR00115">
    <property type="entry name" value="tig"/>
    <property type="match status" value="1"/>
</dbReference>
<dbReference type="PANTHER" id="PTHR30560">
    <property type="entry name" value="TRIGGER FACTOR CHAPERONE AND PEPTIDYL-PROLYL CIS/TRANS ISOMERASE"/>
    <property type="match status" value="1"/>
</dbReference>
<dbReference type="PANTHER" id="PTHR30560:SF3">
    <property type="entry name" value="TRIGGER FACTOR-LIKE PROTEIN TIG, CHLOROPLASTIC"/>
    <property type="match status" value="1"/>
</dbReference>
<dbReference type="Pfam" id="PF00254">
    <property type="entry name" value="FKBP_C"/>
    <property type="match status" value="1"/>
</dbReference>
<dbReference type="Pfam" id="PF05698">
    <property type="entry name" value="Trigger_C"/>
    <property type="match status" value="1"/>
</dbReference>
<dbReference type="Pfam" id="PF05697">
    <property type="entry name" value="Trigger_N"/>
    <property type="match status" value="1"/>
</dbReference>
<dbReference type="PIRSF" id="PIRSF003095">
    <property type="entry name" value="Trigger_factor"/>
    <property type="match status" value="1"/>
</dbReference>
<dbReference type="SUPFAM" id="SSF54534">
    <property type="entry name" value="FKBP-like"/>
    <property type="match status" value="1"/>
</dbReference>
<dbReference type="SUPFAM" id="SSF109998">
    <property type="entry name" value="Triger factor/SurA peptide-binding domain-like"/>
    <property type="match status" value="1"/>
</dbReference>
<dbReference type="SUPFAM" id="SSF102735">
    <property type="entry name" value="Trigger factor ribosome-binding domain"/>
    <property type="match status" value="1"/>
</dbReference>
<dbReference type="PROSITE" id="PS50059">
    <property type="entry name" value="FKBP_PPIASE"/>
    <property type="match status" value="1"/>
</dbReference>
<organism>
    <name type="scientific">Shewanella baltica (strain OS223)</name>
    <dbReference type="NCBI Taxonomy" id="407976"/>
    <lineage>
        <taxon>Bacteria</taxon>
        <taxon>Pseudomonadati</taxon>
        <taxon>Pseudomonadota</taxon>
        <taxon>Gammaproteobacteria</taxon>
        <taxon>Alteromonadales</taxon>
        <taxon>Shewanellaceae</taxon>
        <taxon>Shewanella</taxon>
    </lineage>
</organism>
<keyword id="KW-0131">Cell cycle</keyword>
<keyword id="KW-0132">Cell division</keyword>
<keyword id="KW-0143">Chaperone</keyword>
<keyword id="KW-0963">Cytoplasm</keyword>
<keyword id="KW-0413">Isomerase</keyword>
<keyword id="KW-0697">Rotamase</keyword>
<sequence length="434" mass="47800">MQVSVEATQGLERRLTISVPAEQIEKLVKDSLQREAKRARIPGFRPGKVPITVINKRYGAAIRQDIMGEVMQRNFIEAIIAEKLNPAGAPTFVPGSTDGEKFEFIATFEIYPEVELKGLDAIEVEQPKAEVTDADVDTMIETLRKQHATFAAVEREAADGDKVKMNFVGSVDGEEFEGGKADDFELQLGSGRMIPGFEAGILGHKAGEEFVIDVNFPEEYHAENLKGKAAKFAITLTEVQAANLPEVNDEFAALFGISEGGLEALKAEIRKNMNRELEQALKANVKEQVINGLLANNDITLPKALIDGEVNVLRQQAMQRFGNQTANMPELPAELFTEQAARRVKIGLLLGEVIKTNELKAEDERVQGLIASMASAYEDPSEVVAYYNSNKELMQNMRNVALEEQAVEALLKSAKVTEKEVAFEEFMNKATGRA</sequence>